<evidence type="ECO:0000255" key="1">
    <source>
        <dbReference type="HAMAP-Rule" id="MF_01328"/>
    </source>
</evidence>
<evidence type="ECO:0000256" key="2">
    <source>
        <dbReference type="SAM" id="MobiDB-lite"/>
    </source>
</evidence>
<evidence type="ECO:0000305" key="3"/>
<gene>
    <name evidence="1" type="primary">rplD</name>
    <name type="ordered locus">JTY_0722</name>
</gene>
<dbReference type="EMBL" id="AP010918">
    <property type="protein sequence ID" value="BAH25015.1"/>
    <property type="molecule type" value="Genomic_DNA"/>
</dbReference>
<dbReference type="RefSeq" id="WP_003403580.1">
    <property type="nucleotide sequence ID" value="NZ_CP014566.1"/>
</dbReference>
<dbReference type="SMR" id="C1AL36"/>
<dbReference type="KEGG" id="mbt:JTY_0722"/>
<dbReference type="HOGENOM" id="CLU_041575_5_0_11"/>
<dbReference type="GO" id="GO:1990904">
    <property type="term" value="C:ribonucleoprotein complex"/>
    <property type="evidence" value="ECO:0007669"/>
    <property type="project" value="UniProtKB-KW"/>
</dbReference>
<dbReference type="GO" id="GO:0005840">
    <property type="term" value="C:ribosome"/>
    <property type="evidence" value="ECO:0007669"/>
    <property type="project" value="UniProtKB-KW"/>
</dbReference>
<dbReference type="GO" id="GO:0019843">
    <property type="term" value="F:rRNA binding"/>
    <property type="evidence" value="ECO:0007669"/>
    <property type="project" value="UniProtKB-UniRule"/>
</dbReference>
<dbReference type="GO" id="GO:0003735">
    <property type="term" value="F:structural constituent of ribosome"/>
    <property type="evidence" value="ECO:0007669"/>
    <property type="project" value="InterPro"/>
</dbReference>
<dbReference type="GO" id="GO:0006412">
    <property type="term" value="P:translation"/>
    <property type="evidence" value="ECO:0007669"/>
    <property type="project" value="UniProtKB-UniRule"/>
</dbReference>
<dbReference type="FunFam" id="3.40.1370.10:FF:000004">
    <property type="entry name" value="50S ribosomal protein L4"/>
    <property type="match status" value="1"/>
</dbReference>
<dbReference type="Gene3D" id="3.40.1370.10">
    <property type="match status" value="1"/>
</dbReference>
<dbReference type="HAMAP" id="MF_01328_B">
    <property type="entry name" value="Ribosomal_uL4_B"/>
    <property type="match status" value="1"/>
</dbReference>
<dbReference type="InterPro" id="IPR002136">
    <property type="entry name" value="Ribosomal_uL4"/>
</dbReference>
<dbReference type="InterPro" id="IPR013005">
    <property type="entry name" value="Ribosomal_uL4-like"/>
</dbReference>
<dbReference type="InterPro" id="IPR023574">
    <property type="entry name" value="Ribosomal_uL4_dom_sf"/>
</dbReference>
<dbReference type="NCBIfam" id="TIGR03953">
    <property type="entry name" value="rplD_bact"/>
    <property type="match status" value="1"/>
</dbReference>
<dbReference type="PANTHER" id="PTHR10746">
    <property type="entry name" value="50S RIBOSOMAL PROTEIN L4"/>
    <property type="match status" value="1"/>
</dbReference>
<dbReference type="PANTHER" id="PTHR10746:SF6">
    <property type="entry name" value="LARGE RIBOSOMAL SUBUNIT PROTEIN UL4M"/>
    <property type="match status" value="1"/>
</dbReference>
<dbReference type="Pfam" id="PF00573">
    <property type="entry name" value="Ribosomal_L4"/>
    <property type="match status" value="1"/>
</dbReference>
<dbReference type="SUPFAM" id="SSF52166">
    <property type="entry name" value="Ribosomal protein L4"/>
    <property type="match status" value="1"/>
</dbReference>
<protein>
    <recommendedName>
        <fullName evidence="1">Large ribosomal subunit protein uL4</fullName>
    </recommendedName>
    <alternativeName>
        <fullName evidence="3">50S ribosomal protein L4</fullName>
    </alternativeName>
</protein>
<accession>C1AL36</accession>
<organism>
    <name type="scientific">Mycobacterium bovis (strain BCG / Tokyo 172 / ATCC 35737 / TMC 1019)</name>
    <dbReference type="NCBI Taxonomy" id="561275"/>
    <lineage>
        <taxon>Bacteria</taxon>
        <taxon>Bacillati</taxon>
        <taxon>Actinomycetota</taxon>
        <taxon>Actinomycetes</taxon>
        <taxon>Mycobacteriales</taxon>
        <taxon>Mycobacteriaceae</taxon>
        <taxon>Mycobacterium</taxon>
        <taxon>Mycobacterium tuberculosis complex</taxon>
    </lineage>
</organism>
<proteinExistence type="inferred from homology"/>
<name>RL4_MYCBT</name>
<keyword id="KW-0687">Ribonucleoprotein</keyword>
<keyword id="KW-0689">Ribosomal protein</keyword>
<keyword id="KW-0694">RNA-binding</keyword>
<keyword id="KW-0699">rRNA-binding</keyword>
<feature type="chain" id="PRO_1000166017" description="Large ribosomal subunit protein uL4">
    <location>
        <begin position="1"/>
        <end position="223"/>
    </location>
</feature>
<feature type="region of interest" description="Disordered" evidence="2">
    <location>
        <begin position="49"/>
        <end position="106"/>
    </location>
</feature>
<comment type="function">
    <text evidence="1">One of the primary rRNA binding proteins, this protein initially binds near the 5'-end of the 23S rRNA. It is important during the early stages of 50S assembly. It makes multiple contacts with different domains of the 23S rRNA in the assembled 50S subunit and ribosome.</text>
</comment>
<comment type="function">
    <text evidence="1">Forms part of the polypeptide exit tunnel.</text>
</comment>
<comment type="subunit">
    <text evidence="1">Part of the 50S ribosomal subunit.</text>
</comment>
<comment type="similarity">
    <text evidence="1">Belongs to the universal ribosomal protein uL4 family.</text>
</comment>
<sequence length="223" mass="23743">MAAQEQKTLKIDVKTPAGKVDGAIELPAELFDVPANIALMHQVVTAQRAAARQGTHSTKTRGEVSGGGRKPYRQKGTGRARQGSTRAPQFTGGGVVHGPKPRDYSQRTPKKMIAAALRGALSDRARNGRIHAITELVEGQNPSTKSARAFLASLTERKQVLVVIGRSDEAGAKSVRNLPGVHILAPDQLNTYDVLRADDVVFSVEALNAYIAANTTTSEEVSA</sequence>
<reference key="1">
    <citation type="journal article" date="2009" name="Vaccine">
        <title>Whole genome sequence analysis of Mycobacterium bovis bacillus Calmette-Guerin (BCG) Tokyo 172: a comparative study of BCG vaccine substrains.</title>
        <authorList>
            <person name="Seki M."/>
            <person name="Honda I."/>
            <person name="Fujita I."/>
            <person name="Yano I."/>
            <person name="Yamamoto S."/>
            <person name="Koyama A."/>
        </authorList>
    </citation>
    <scope>NUCLEOTIDE SEQUENCE [LARGE SCALE GENOMIC DNA]</scope>
    <source>
        <strain>BCG / Tokyo 172 / ATCC 35737 / TMC 1019</strain>
    </source>
</reference>